<comment type="function">
    <text evidence="1">Required for the formation of a threonylcarbamoyl group on adenosine at position 37 (t(6)A37) in tRNAs that read codons beginning with adenine. Catalyzes the conversion of L-threonine, HCO(3)(-)/CO(2) and ATP to give threonylcarbamoyl-AMP (TC-AMP) as the acyladenylate intermediate, with the release of diphosphate.</text>
</comment>
<comment type="catalytic activity">
    <reaction>
        <text>L-threonine + hydrogencarbonate + ATP = L-threonylcarbamoyladenylate + diphosphate + H2O</text>
        <dbReference type="Rhea" id="RHEA:36407"/>
        <dbReference type="ChEBI" id="CHEBI:15377"/>
        <dbReference type="ChEBI" id="CHEBI:17544"/>
        <dbReference type="ChEBI" id="CHEBI:30616"/>
        <dbReference type="ChEBI" id="CHEBI:33019"/>
        <dbReference type="ChEBI" id="CHEBI:57926"/>
        <dbReference type="ChEBI" id="CHEBI:73682"/>
        <dbReference type="EC" id="2.7.7.87"/>
    </reaction>
</comment>
<comment type="subcellular location">
    <subcellularLocation>
        <location evidence="3">Cytoplasm</location>
    </subcellularLocation>
</comment>
<comment type="similarity">
    <text evidence="3">Belongs to the SUA5 family.</text>
</comment>
<keyword id="KW-0067">ATP-binding</keyword>
<keyword id="KW-0963">Cytoplasm</keyword>
<keyword id="KW-0547">Nucleotide-binding</keyword>
<keyword id="KW-0548">Nucleotidyltransferase</keyword>
<keyword id="KW-1185">Reference proteome</keyword>
<keyword id="KW-0808">Transferase</keyword>
<keyword id="KW-0819">tRNA processing</keyword>
<feature type="chain" id="PRO_0000202025" description="Putative threonylcarbamoyl-AMP synthase">
    <location>
        <begin position="1"/>
        <end position="217"/>
    </location>
</feature>
<feature type="domain" description="YrdC-like" evidence="2">
    <location>
        <begin position="14"/>
        <end position="199"/>
    </location>
</feature>
<organism>
    <name type="scientific">Mycobacterium tuberculosis (strain ATCC 25618 / H37Rv)</name>
    <dbReference type="NCBI Taxonomy" id="83332"/>
    <lineage>
        <taxon>Bacteria</taxon>
        <taxon>Bacillati</taxon>
        <taxon>Actinomycetota</taxon>
        <taxon>Actinomycetes</taxon>
        <taxon>Mycobacteriales</taxon>
        <taxon>Mycobacteriaceae</taxon>
        <taxon>Mycobacterium</taxon>
        <taxon>Mycobacterium tuberculosis complex</taxon>
    </lineage>
</organism>
<accession>P9WGC9</accession>
<accession>L0T985</accession>
<accession>Q10618</accession>
<proteinExistence type="evidence at protein level"/>
<sequence length="217" mass="22571">MTETFDCADPEQRSRGIVSAVGAIKAGQLVVMPTDTVYGIGADAFDSSAVAALLSAKGRGRDMPVGVLVGSWHTIEGLVYSMPDGARELIRAFWPGALSLVVVQAPSLQWDLGDAHGTVMLRMPLHPVAIELLREVGPMAVSSANISGHPPPVDAEQARSQLGDHVAVYLDAGPSEQQAGSTIVDLTGATPRVLRPGPVSTERIAEVLGVDAASLFG</sequence>
<reference key="1">
    <citation type="journal article" date="1998" name="Nature">
        <title>Deciphering the biology of Mycobacterium tuberculosis from the complete genome sequence.</title>
        <authorList>
            <person name="Cole S.T."/>
            <person name="Brosch R."/>
            <person name="Parkhill J."/>
            <person name="Garnier T."/>
            <person name="Churcher C.M."/>
            <person name="Harris D.E."/>
            <person name="Gordon S.V."/>
            <person name="Eiglmeier K."/>
            <person name="Gas S."/>
            <person name="Barry C.E. III"/>
            <person name="Tekaia F."/>
            <person name="Badcock K."/>
            <person name="Basham D."/>
            <person name="Brown D."/>
            <person name="Chillingworth T."/>
            <person name="Connor R."/>
            <person name="Davies R.M."/>
            <person name="Devlin K."/>
            <person name="Feltwell T."/>
            <person name="Gentles S."/>
            <person name="Hamlin N."/>
            <person name="Holroyd S."/>
            <person name="Hornsby T."/>
            <person name="Jagels K."/>
            <person name="Krogh A."/>
            <person name="McLean J."/>
            <person name="Moule S."/>
            <person name="Murphy L.D."/>
            <person name="Oliver S."/>
            <person name="Osborne J."/>
            <person name="Quail M.A."/>
            <person name="Rajandream M.A."/>
            <person name="Rogers J."/>
            <person name="Rutter S."/>
            <person name="Seeger K."/>
            <person name="Skelton S."/>
            <person name="Squares S."/>
            <person name="Squares R."/>
            <person name="Sulston J.E."/>
            <person name="Taylor K."/>
            <person name="Whitehead S."/>
            <person name="Barrell B.G."/>
        </authorList>
    </citation>
    <scope>NUCLEOTIDE SEQUENCE [LARGE SCALE GENOMIC DNA]</scope>
    <source>
        <strain>ATCC 25618 / H37Rv</strain>
    </source>
</reference>
<reference key="2">
    <citation type="journal article" date="2011" name="Mol. Cell. Proteomics">
        <title>Proteogenomic analysis of Mycobacterium tuberculosis by high resolution mass spectrometry.</title>
        <authorList>
            <person name="Kelkar D.S."/>
            <person name="Kumar D."/>
            <person name="Kumar P."/>
            <person name="Balakrishnan L."/>
            <person name="Muthusamy B."/>
            <person name="Yadav A.K."/>
            <person name="Shrivastava P."/>
            <person name="Marimuthu A."/>
            <person name="Anand S."/>
            <person name="Sundaram H."/>
            <person name="Kingsbury R."/>
            <person name="Harsha H.C."/>
            <person name="Nair B."/>
            <person name="Prasad T.S."/>
            <person name="Chauhan D.S."/>
            <person name="Katoch K."/>
            <person name="Katoch V.M."/>
            <person name="Kumar P."/>
            <person name="Chaerkady R."/>
            <person name="Ramachandran S."/>
            <person name="Dash D."/>
            <person name="Pandey A."/>
        </authorList>
    </citation>
    <scope>IDENTIFICATION BY MASS SPECTROMETRY [LARGE SCALE ANALYSIS]</scope>
    <source>
        <strain>ATCC 25618 / H37Rv</strain>
    </source>
</reference>
<protein>
    <recommendedName>
        <fullName>Putative threonylcarbamoyl-AMP synthase</fullName>
        <shortName>TC-AMP synthase</shortName>
        <ecNumber>2.7.7.87</ecNumber>
    </recommendedName>
    <alternativeName>
        <fullName>L-threonylcarbamoyladenylate synthase</fullName>
    </alternativeName>
    <alternativeName>
        <fullName>tRNA threonylcarbamoyladenosine biosynthesis protein Rv1301</fullName>
    </alternativeName>
</protein>
<evidence type="ECO:0000250" key="1"/>
<evidence type="ECO:0000255" key="2">
    <source>
        <dbReference type="PROSITE-ProRule" id="PRU00518"/>
    </source>
</evidence>
<evidence type="ECO:0000305" key="3"/>
<gene>
    <name type="ordered locus">Rv1301</name>
    <name type="ORF">MTCY373.21</name>
</gene>
<dbReference type="EC" id="2.7.7.87"/>
<dbReference type="EMBL" id="AL123456">
    <property type="protein sequence ID" value="CCP44058.1"/>
    <property type="molecule type" value="Genomic_DNA"/>
</dbReference>
<dbReference type="PIR" id="A70774">
    <property type="entry name" value="A70774"/>
</dbReference>
<dbReference type="RefSeq" id="NP_215817.1">
    <property type="nucleotide sequence ID" value="NC_000962.3"/>
</dbReference>
<dbReference type="RefSeq" id="WP_003898815.1">
    <property type="nucleotide sequence ID" value="NZ_NVQJ01000030.1"/>
</dbReference>
<dbReference type="SMR" id="P9WGC9"/>
<dbReference type="FunCoup" id="P9WGC9">
    <property type="interactions" value="192"/>
</dbReference>
<dbReference type="STRING" id="83332.Rv1301"/>
<dbReference type="PaxDb" id="83332-Rv1301"/>
<dbReference type="DNASU" id="886970"/>
<dbReference type="GeneID" id="886970"/>
<dbReference type="KEGG" id="mtu:Rv1301"/>
<dbReference type="KEGG" id="mtv:RVBD_1301"/>
<dbReference type="TubercuList" id="Rv1301"/>
<dbReference type="eggNOG" id="COG0009">
    <property type="taxonomic scope" value="Bacteria"/>
</dbReference>
<dbReference type="InParanoid" id="P9WGC9"/>
<dbReference type="OrthoDB" id="9814580at2"/>
<dbReference type="PhylomeDB" id="P9WGC9"/>
<dbReference type="Proteomes" id="UP000001584">
    <property type="component" value="Chromosome"/>
</dbReference>
<dbReference type="GO" id="GO:0005737">
    <property type="term" value="C:cytoplasm"/>
    <property type="evidence" value="ECO:0000318"/>
    <property type="project" value="GO_Central"/>
</dbReference>
<dbReference type="GO" id="GO:0005524">
    <property type="term" value="F:ATP binding"/>
    <property type="evidence" value="ECO:0007669"/>
    <property type="project" value="UniProtKB-KW"/>
</dbReference>
<dbReference type="GO" id="GO:0003725">
    <property type="term" value="F:double-stranded RNA binding"/>
    <property type="evidence" value="ECO:0007669"/>
    <property type="project" value="InterPro"/>
</dbReference>
<dbReference type="GO" id="GO:0061710">
    <property type="term" value="F:L-threonylcarbamoyladenylate synthase"/>
    <property type="evidence" value="ECO:0007669"/>
    <property type="project" value="UniProtKB-EC"/>
</dbReference>
<dbReference type="GO" id="GO:0016779">
    <property type="term" value="F:nucleotidyltransferase activity"/>
    <property type="evidence" value="ECO:0000318"/>
    <property type="project" value="GO_Central"/>
</dbReference>
<dbReference type="GO" id="GO:0000049">
    <property type="term" value="F:tRNA binding"/>
    <property type="evidence" value="ECO:0000318"/>
    <property type="project" value="GO_Central"/>
</dbReference>
<dbReference type="GO" id="GO:0006450">
    <property type="term" value="P:regulation of translational fidelity"/>
    <property type="evidence" value="ECO:0000318"/>
    <property type="project" value="GO_Central"/>
</dbReference>
<dbReference type="GO" id="GO:0008033">
    <property type="term" value="P:tRNA processing"/>
    <property type="evidence" value="ECO:0007669"/>
    <property type="project" value="UniProtKB-KW"/>
</dbReference>
<dbReference type="FunFam" id="3.90.870.10:FF:000006">
    <property type="entry name" value="Putative threonylcarbamoyl-AMP synthase"/>
    <property type="match status" value="1"/>
</dbReference>
<dbReference type="Gene3D" id="3.90.870.10">
    <property type="entry name" value="DHBP synthase"/>
    <property type="match status" value="1"/>
</dbReference>
<dbReference type="InterPro" id="IPR017945">
    <property type="entry name" value="DHBP_synth_RibB-like_a/b_dom"/>
</dbReference>
<dbReference type="InterPro" id="IPR006070">
    <property type="entry name" value="Sua5-like_dom"/>
</dbReference>
<dbReference type="InterPro" id="IPR050156">
    <property type="entry name" value="TC-AMP_synthase_SUA5"/>
</dbReference>
<dbReference type="NCBIfam" id="TIGR00057">
    <property type="entry name" value="L-threonylcarbamoyladenylate synthase"/>
    <property type="match status" value="1"/>
</dbReference>
<dbReference type="PANTHER" id="PTHR17490">
    <property type="entry name" value="SUA5"/>
    <property type="match status" value="1"/>
</dbReference>
<dbReference type="PANTHER" id="PTHR17490:SF16">
    <property type="entry name" value="THREONYLCARBAMOYL-AMP SYNTHASE"/>
    <property type="match status" value="1"/>
</dbReference>
<dbReference type="Pfam" id="PF01300">
    <property type="entry name" value="Sua5_yciO_yrdC"/>
    <property type="match status" value="1"/>
</dbReference>
<dbReference type="SUPFAM" id="SSF55821">
    <property type="entry name" value="YrdC/RibB"/>
    <property type="match status" value="1"/>
</dbReference>
<dbReference type="PROSITE" id="PS51163">
    <property type="entry name" value="YRDC"/>
    <property type="match status" value="1"/>
</dbReference>
<name>TSAC_MYCTU</name>